<keyword id="KW-0227">DNA damage</keyword>
<keyword id="KW-0234">DNA repair</keyword>
<keyword id="KW-0235">DNA replication</keyword>
<keyword id="KW-0436">Ligase</keyword>
<keyword id="KW-0460">Magnesium</keyword>
<keyword id="KW-0464">Manganese</keyword>
<keyword id="KW-0479">Metal-binding</keyword>
<keyword id="KW-0520">NAD</keyword>
<keyword id="KW-0862">Zinc</keyword>
<protein>
    <recommendedName>
        <fullName evidence="1">DNA ligase</fullName>
        <ecNumber evidence="1">6.5.1.2</ecNumber>
    </recommendedName>
    <alternativeName>
        <fullName evidence="1">Polydeoxyribonucleotide synthase [NAD(+)]</fullName>
    </alternativeName>
</protein>
<feature type="chain" id="PRO_0000313223" description="DNA ligase">
    <location>
        <begin position="1"/>
        <end position="677"/>
    </location>
</feature>
<feature type="domain" description="BRCT" evidence="1">
    <location>
        <begin position="594"/>
        <end position="677"/>
    </location>
</feature>
<feature type="active site" description="N6-AMP-lysine intermediate" evidence="1">
    <location>
        <position position="119"/>
    </location>
</feature>
<feature type="binding site" evidence="1">
    <location>
        <begin position="34"/>
        <end position="38"/>
    </location>
    <ligand>
        <name>NAD(+)</name>
        <dbReference type="ChEBI" id="CHEBI:57540"/>
    </ligand>
</feature>
<feature type="binding site" evidence="1">
    <location>
        <begin position="83"/>
        <end position="84"/>
    </location>
    <ligand>
        <name>NAD(+)</name>
        <dbReference type="ChEBI" id="CHEBI:57540"/>
    </ligand>
</feature>
<feature type="binding site" evidence="1">
    <location>
        <position position="117"/>
    </location>
    <ligand>
        <name>NAD(+)</name>
        <dbReference type="ChEBI" id="CHEBI:57540"/>
    </ligand>
</feature>
<feature type="binding site" evidence="1">
    <location>
        <position position="140"/>
    </location>
    <ligand>
        <name>NAD(+)</name>
        <dbReference type="ChEBI" id="CHEBI:57540"/>
    </ligand>
</feature>
<feature type="binding site" evidence="1">
    <location>
        <position position="175"/>
    </location>
    <ligand>
        <name>NAD(+)</name>
        <dbReference type="ChEBI" id="CHEBI:57540"/>
    </ligand>
</feature>
<feature type="binding site" evidence="1">
    <location>
        <position position="283"/>
    </location>
    <ligand>
        <name>NAD(+)</name>
        <dbReference type="ChEBI" id="CHEBI:57540"/>
    </ligand>
</feature>
<feature type="binding site" evidence="1">
    <location>
        <position position="307"/>
    </location>
    <ligand>
        <name>NAD(+)</name>
        <dbReference type="ChEBI" id="CHEBI:57540"/>
    </ligand>
</feature>
<feature type="binding site" evidence="1">
    <location>
        <position position="401"/>
    </location>
    <ligand>
        <name>Zn(2+)</name>
        <dbReference type="ChEBI" id="CHEBI:29105"/>
    </ligand>
</feature>
<feature type="binding site" evidence="1">
    <location>
        <position position="404"/>
    </location>
    <ligand>
        <name>Zn(2+)</name>
        <dbReference type="ChEBI" id="CHEBI:29105"/>
    </ligand>
</feature>
<feature type="binding site" evidence="1">
    <location>
        <position position="419"/>
    </location>
    <ligand>
        <name>Zn(2+)</name>
        <dbReference type="ChEBI" id="CHEBI:29105"/>
    </ligand>
</feature>
<feature type="binding site" evidence="1">
    <location>
        <position position="425"/>
    </location>
    <ligand>
        <name>Zn(2+)</name>
        <dbReference type="ChEBI" id="CHEBI:29105"/>
    </ligand>
</feature>
<proteinExistence type="inferred from homology"/>
<sequence length="677" mass="76854">MKQEEAKLELDKLNSQIQHHDFLYYTQDNPQITDAEYDVLCHKRNLILESFPELASNNNYQDNVGSTPDAKFAKVKHAEKMLSLDNAFNQQDIEKFITRTKKLLDMDNSQSIAISCELKIDGLSFSVIYKKGEISQASTRGNGYFGENITNNVKTIKNLPHTIQNAPDSLEVRGEIYIDRSDFIQLNKDGNNFANPRNAAAGSVRQLDINITAQRKLKYFMYTIVNTKCLTQEETLNQLKTLGFCVNEHTITTNNIEDALNFYNQFYNNRSNISYDIDGIIYKVNDIKSQHILGATNKSPRWAIAYKFPAAEAKTLVNKISIQIGRTGVLTPIAELSPINIGGVIVTRASLHNKSEIERKDIREGDYVIVKRAGDVIPQVVDVDKNLRAQELTKFIFPTTCPSCGSNLFQAEQEVSIYCTGELFCKNQILEKIKHFVSKDAFNIIGFGKKQLLFFYEQGLITNIVDIFTLEEKISNSDLKLESLHGWGEKSIHNLFSAINNSKTISLENFIFALGIRFVGKYIAKILAKHFLSYEKWYHEMLRLAQDENYLLNIQQIGHKTIHSLKMFFTEQHNLDTINNLVRHLTITDAKTTSHLSLLHGKTIVFTGELSNMSRHEAKTKSETAGAKVSSSLSKNTDFLIVGNNPGSKYKKAQSLNIQILTEDLWLQYISPNTNEN</sequence>
<evidence type="ECO:0000255" key="1">
    <source>
        <dbReference type="HAMAP-Rule" id="MF_01588"/>
    </source>
</evidence>
<accession>Q3YRC1</accession>
<organism>
    <name type="scientific">Ehrlichia canis (strain Jake)</name>
    <dbReference type="NCBI Taxonomy" id="269484"/>
    <lineage>
        <taxon>Bacteria</taxon>
        <taxon>Pseudomonadati</taxon>
        <taxon>Pseudomonadota</taxon>
        <taxon>Alphaproteobacteria</taxon>
        <taxon>Rickettsiales</taxon>
        <taxon>Anaplasmataceae</taxon>
        <taxon>Ehrlichia</taxon>
    </lineage>
</organism>
<name>DNLJ_EHRCJ</name>
<comment type="function">
    <text evidence="1">DNA ligase that catalyzes the formation of phosphodiester linkages between 5'-phosphoryl and 3'-hydroxyl groups in double-stranded DNA using NAD as a coenzyme and as the energy source for the reaction. It is essential for DNA replication and repair of damaged DNA.</text>
</comment>
<comment type="catalytic activity">
    <reaction evidence="1">
        <text>NAD(+) + (deoxyribonucleotide)n-3'-hydroxyl + 5'-phospho-(deoxyribonucleotide)m = (deoxyribonucleotide)n+m + AMP + beta-nicotinamide D-nucleotide.</text>
        <dbReference type="EC" id="6.5.1.2"/>
    </reaction>
</comment>
<comment type="cofactor">
    <cofactor evidence="1">
        <name>Mg(2+)</name>
        <dbReference type="ChEBI" id="CHEBI:18420"/>
    </cofactor>
    <cofactor evidence="1">
        <name>Mn(2+)</name>
        <dbReference type="ChEBI" id="CHEBI:29035"/>
    </cofactor>
</comment>
<comment type="similarity">
    <text evidence="1">Belongs to the NAD-dependent DNA ligase family. LigA subfamily.</text>
</comment>
<reference key="1">
    <citation type="journal article" date="2006" name="J. Bacteriol.">
        <title>The genome of the obligately intracellular bacterium Ehrlichia canis reveals themes of complex membrane structure and immune evasion strategies.</title>
        <authorList>
            <person name="Mavromatis K."/>
            <person name="Doyle C.K."/>
            <person name="Lykidis A."/>
            <person name="Ivanova N."/>
            <person name="Francino M.P."/>
            <person name="Chain P."/>
            <person name="Shin M."/>
            <person name="Malfatti S."/>
            <person name="Larimer F."/>
            <person name="Copeland A."/>
            <person name="Detter J.C."/>
            <person name="Land M."/>
            <person name="Richardson P.M."/>
            <person name="Yu X.J."/>
            <person name="Walker D.H."/>
            <person name="McBride J.W."/>
            <person name="Kyrpides N.C."/>
        </authorList>
    </citation>
    <scope>NUCLEOTIDE SEQUENCE [LARGE SCALE GENOMIC DNA]</scope>
    <source>
        <strain>Jake</strain>
    </source>
</reference>
<gene>
    <name evidence="1" type="primary">ligA</name>
    <name type="ordered locus">Ecaj_0702</name>
</gene>
<dbReference type="EC" id="6.5.1.2" evidence="1"/>
<dbReference type="EMBL" id="CP000107">
    <property type="protein sequence ID" value="AAZ68734.1"/>
    <property type="molecule type" value="Genomic_DNA"/>
</dbReference>
<dbReference type="RefSeq" id="WP_011304811.1">
    <property type="nucleotide sequence ID" value="NC_007354.1"/>
</dbReference>
<dbReference type="SMR" id="Q3YRC1"/>
<dbReference type="FunCoup" id="Q3YRC1">
    <property type="interactions" value="251"/>
</dbReference>
<dbReference type="STRING" id="269484.Ecaj_0702"/>
<dbReference type="KEGG" id="ecn:Ecaj_0702"/>
<dbReference type="eggNOG" id="COG0272">
    <property type="taxonomic scope" value="Bacteria"/>
</dbReference>
<dbReference type="HOGENOM" id="CLU_007764_2_1_5"/>
<dbReference type="InParanoid" id="Q3YRC1"/>
<dbReference type="Proteomes" id="UP000000435">
    <property type="component" value="Chromosome"/>
</dbReference>
<dbReference type="GO" id="GO:0005829">
    <property type="term" value="C:cytosol"/>
    <property type="evidence" value="ECO:0007669"/>
    <property type="project" value="TreeGrafter"/>
</dbReference>
<dbReference type="GO" id="GO:0003911">
    <property type="term" value="F:DNA ligase (NAD+) activity"/>
    <property type="evidence" value="ECO:0007669"/>
    <property type="project" value="UniProtKB-UniRule"/>
</dbReference>
<dbReference type="GO" id="GO:0046872">
    <property type="term" value="F:metal ion binding"/>
    <property type="evidence" value="ECO:0007669"/>
    <property type="project" value="UniProtKB-KW"/>
</dbReference>
<dbReference type="GO" id="GO:0006281">
    <property type="term" value="P:DNA repair"/>
    <property type="evidence" value="ECO:0007669"/>
    <property type="project" value="UniProtKB-KW"/>
</dbReference>
<dbReference type="GO" id="GO:0006260">
    <property type="term" value="P:DNA replication"/>
    <property type="evidence" value="ECO:0007669"/>
    <property type="project" value="UniProtKB-KW"/>
</dbReference>
<dbReference type="CDD" id="cd17748">
    <property type="entry name" value="BRCT_DNA_ligase_like"/>
    <property type="match status" value="1"/>
</dbReference>
<dbReference type="CDD" id="cd00114">
    <property type="entry name" value="LIGANc"/>
    <property type="match status" value="1"/>
</dbReference>
<dbReference type="FunFam" id="2.40.50.140:FF:000012">
    <property type="entry name" value="DNA ligase"/>
    <property type="match status" value="1"/>
</dbReference>
<dbReference type="Gene3D" id="6.20.10.30">
    <property type="match status" value="1"/>
</dbReference>
<dbReference type="Gene3D" id="1.10.150.20">
    <property type="entry name" value="5' to 3' exonuclease, C-terminal subdomain"/>
    <property type="match status" value="2"/>
</dbReference>
<dbReference type="Gene3D" id="3.40.50.10190">
    <property type="entry name" value="BRCT domain"/>
    <property type="match status" value="1"/>
</dbReference>
<dbReference type="Gene3D" id="3.30.470.30">
    <property type="entry name" value="DNA ligase/mRNA capping enzyme"/>
    <property type="match status" value="1"/>
</dbReference>
<dbReference type="Gene3D" id="1.10.287.610">
    <property type="entry name" value="Helix hairpin bin"/>
    <property type="match status" value="1"/>
</dbReference>
<dbReference type="Gene3D" id="2.40.50.140">
    <property type="entry name" value="Nucleic acid-binding proteins"/>
    <property type="match status" value="1"/>
</dbReference>
<dbReference type="HAMAP" id="MF_01588">
    <property type="entry name" value="DNA_ligase_A"/>
    <property type="match status" value="1"/>
</dbReference>
<dbReference type="InterPro" id="IPR001357">
    <property type="entry name" value="BRCT_dom"/>
</dbReference>
<dbReference type="InterPro" id="IPR036420">
    <property type="entry name" value="BRCT_dom_sf"/>
</dbReference>
<dbReference type="InterPro" id="IPR041663">
    <property type="entry name" value="DisA/LigA_HHH"/>
</dbReference>
<dbReference type="InterPro" id="IPR001679">
    <property type="entry name" value="DNA_ligase"/>
</dbReference>
<dbReference type="InterPro" id="IPR013839">
    <property type="entry name" value="DNAligase_adenylation"/>
</dbReference>
<dbReference type="InterPro" id="IPR013840">
    <property type="entry name" value="DNAligase_N"/>
</dbReference>
<dbReference type="InterPro" id="IPR012340">
    <property type="entry name" value="NA-bd_OB-fold"/>
</dbReference>
<dbReference type="InterPro" id="IPR004150">
    <property type="entry name" value="NAD_DNA_ligase_OB"/>
</dbReference>
<dbReference type="InterPro" id="IPR010994">
    <property type="entry name" value="RuvA_2-like"/>
</dbReference>
<dbReference type="InterPro" id="IPR004149">
    <property type="entry name" value="Znf_DNAligase_C4"/>
</dbReference>
<dbReference type="NCBIfam" id="TIGR00575">
    <property type="entry name" value="dnlj"/>
    <property type="match status" value="1"/>
</dbReference>
<dbReference type="NCBIfam" id="NF005932">
    <property type="entry name" value="PRK07956.1"/>
    <property type="match status" value="1"/>
</dbReference>
<dbReference type="PANTHER" id="PTHR23389">
    <property type="entry name" value="CHROMOSOME TRANSMISSION FIDELITY FACTOR 18"/>
    <property type="match status" value="1"/>
</dbReference>
<dbReference type="PANTHER" id="PTHR23389:SF9">
    <property type="entry name" value="DNA LIGASE"/>
    <property type="match status" value="1"/>
</dbReference>
<dbReference type="Pfam" id="PF00533">
    <property type="entry name" value="BRCT"/>
    <property type="match status" value="1"/>
</dbReference>
<dbReference type="Pfam" id="PF01653">
    <property type="entry name" value="DNA_ligase_aden"/>
    <property type="match status" value="1"/>
</dbReference>
<dbReference type="Pfam" id="PF03120">
    <property type="entry name" value="DNA_ligase_OB"/>
    <property type="match status" value="1"/>
</dbReference>
<dbReference type="Pfam" id="PF03119">
    <property type="entry name" value="DNA_ligase_ZBD"/>
    <property type="match status" value="1"/>
</dbReference>
<dbReference type="Pfam" id="PF12826">
    <property type="entry name" value="HHH_2"/>
    <property type="match status" value="1"/>
</dbReference>
<dbReference type="Pfam" id="PF22745">
    <property type="entry name" value="Nlig-Ia"/>
    <property type="match status" value="1"/>
</dbReference>
<dbReference type="PIRSF" id="PIRSF001604">
    <property type="entry name" value="LigA"/>
    <property type="match status" value="1"/>
</dbReference>
<dbReference type="SMART" id="SM00292">
    <property type="entry name" value="BRCT"/>
    <property type="match status" value="1"/>
</dbReference>
<dbReference type="SMART" id="SM00532">
    <property type="entry name" value="LIGANc"/>
    <property type="match status" value="1"/>
</dbReference>
<dbReference type="SUPFAM" id="SSF52113">
    <property type="entry name" value="BRCT domain"/>
    <property type="match status" value="1"/>
</dbReference>
<dbReference type="SUPFAM" id="SSF56091">
    <property type="entry name" value="DNA ligase/mRNA capping enzyme, catalytic domain"/>
    <property type="match status" value="1"/>
</dbReference>
<dbReference type="SUPFAM" id="SSF50249">
    <property type="entry name" value="Nucleic acid-binding proteins"/>
    <property type="match status" value="1"/>
</dbReference>
<dbReference type="SUPFAM" id="SSF47781">
    <property type="entry name" value="RuvA domain 2-like"/>
    <property type="match status" value="1"/>
</dbReference>
<dbReference type="PROSITE" id="PS50172">
    <property type="entry name" value="BRCT"/>
    <property type="match status" value="1"/>
</dbReference>